<accession>Q6FDY3</accession>
<evidence type="ECO:0000255" key="1">
    <source>
        <dbReference type="HAMAP-Rule" id="MF_00120"/>
    </source>
</evidence>
<comment type="function">
    <text evidence="1">Allows the formation of correctly charged Gln-tRNA(Gln) through the transamidation of misacylated Glu-tRNA(Gln) in organisms which lack glutaminyl-tRNA synthetase. The reaction takes place in the presence of glutamine and ATP through an activated gamma-phospho-Glu-tRNA(Gln).</text>
</comment>
<comment type="catalytic activity">
    <reaction evidence="1">
        <text>L-glutamyl-tRNA(Gln) + L-glutamine + ATP + H2O = L-glutaminyl-tRNA(Gln) + L-glutamate + ADP + phosphate + H(+)</text>
        <dbReference type="Rhea" id="RHEA:17521"/>
        <dbReference type="Rhea" id="RHEA-COMP:9681"/>
        <dbReference type="Rhea" id="RHEA-COMP:9684"/>
        <dbReference type="ChEBI" id="CHEBI:15377"/>
        <dbReference type="ChEBI" id="CHEBI:15378"/>
        <dbReference type="ChEBI" id="CHEBI:29985"/>
        <dbReference type="ChEBI" id="CHEBI:30616"/>
        <dbReference type="ChEBI" id="CHEBI:43474"/>
        <dbReference type="ChEBI" id="CHEBI:58359"/>
        <dbReference type="ChEBI" id="CHEBI:78520"/>
        <dbReference type="ChEBI" id="CHEBI:78521"/>
        <dbReference type="ChEBI" id="CHEBI:456216"/>
        <dbReference type="EC" id="6.3.5.7"/>
    </reaction>
</comment>
<comment type="subunit">
    <text evidence="1">Heterotrimer of A, B and C subunits.</text>
</comment>
<comment type="similarity">
    <text evidence="1">Belongs to the amidase family. GatA subfamily.</text>
</comment>
<dbReference type="EC" id="6.3.5.7" evidence="1"/>
<dbReference type="EMBL" id="CR543861">
    <property type="protein sequence ID" value="CAG67725.1"/>
    <property type="molecule type" value="Genomic_DNA"/>
</dbReference>
<dbReference type="RefSeq" id="WP_004922272.1">
    <property type="nucleotide sequence ID" value="NC_005966.1"/>
</dbReference>
<dbReference type="SMR" id="Q6FDY3"/>
<dbReference type="STRING" id="202950.GCA_001485005_02578"/>
<dbReference type="GeneID" id="45233290"/>
<dbReference type="KEGG" id="aci:ACIAD0823"/>
<dbReference type="eggNOG" id="COG0154">
    <property type="taxonomic scope" value="Bacteria"/>
</dbReference>
<dbReference type="HOGENOM" id="CLU_009600_0_3_6"/>
<dbReference type="OrthoDB" id="9811471at2"/>
<dbReference type="BioCyc" id="ASP62977:ACIAD_RS03810-MONOMER"/>
<dbReference type="Proteomes" id="UP000000430">
    <property type="component" value="Chromosome"/>
</dbReference>
<dbReference type="GO" id="GO:0030956">
    <property type="term" value="C:glutamyl-tRNA(Gln) amidotransferase complex"/>
    <property type="evidence" value="ECO:0007669"/>
    <property type="project" value="InterPro"/>
</dbReference>
<dbReference type="GO" id="GO:0005524">
    <property type="term" value="F:ATP binding"/>
    <property type="evidence" value="ECO:0007669"/>
    <property type="project" value="UniProtKB-KW"/>
</dbReference>
<dbReference type="GO" id="GO:0050567">
    <property type="term" value="F:glutaminyl-tRNA synthase (glutamine-hydrolyzing) activity"/>
    <property type="evidence" value="ECO:0007669"/>
    <property type="project" value="UniProtKB-UniRule"/>
</dbReference>
<dbReference type="GO" id="GO:0006412">
    <property type="term" value="P:translation"/>
    <property type="evidence" value="ECO:0007669"/>
    <property type="project" value="UniProtKB-UniRule"/>
</dbReference>
<dbReference type="Gene3D" id="3.90.1300.10">
    <property type="entry name" value="Amidase signature (AS) domain"/>
    <property type="match status" value="1"/>
</dbReference>
<dbReference type="HAMAP" id="MF_00120">
    <property type="entry name" value="GatA"/>
    <property type="match status" value="1"/>
</dbReference>
<dbReference type="InterPro" id="IPR000120">
    <property type="entry name" value="Amidase"/>
</dbReference>
<dbReference type="InterPro" id="IPR020556">
    <property type="entry name" value="Amidase_CS"/>
</dbReference>
<dbReference type="InterPro" id="IPR023631">
    <property type="entry name" value="Amidase_dom"/>
</dbReference>
<dbReference type="InterPro" id="IPR036928">
    <property type="entry name" value="AS_sf"/>
</dbReference>
<dbReference type="InterPro" id="IPR004412">
    <property type="entry name" value="GatA"/>
</dbReference>
<dbReference type="NCBIfam" id="TIGR00132">
    <property type="entry name" value="gatA"/>
    <property type="match status" value="1"/>
</dbReference>
<dbReference type="PANTHER" id="PTHR11895:SF151">
    <property type="entry name" value="GLUTAMYL-TRNA(GLN) AMIDOTRANSFERASE SUBUNIT A"/>
    <property type="match status" value="1"/>
</dbReference>
<dbReference type="PANTHER" id="PTHR11895">
    <property type="entry name" value="TRANSAMIDASE"/>
    <property type="match status" value="1"/>
</dbReference>
<dbReference type="Pfam" id="PF01425">
    <property type="entry name" value="Amidase"/>
    <property type="match status" value="1"/>
</dbReference>
<dbReference type="SUPFAM" id="SSF75304">
    <property type="entry name" value="Amidase signature (AS) enzymes"/>
    <property type="match status" value="1"/>
</dbReference>
<dbReference type="PROSITE" id="PS00571">
    <property type="entry name" value="AMIDASES"/>
    <property type="match status" value="1"/>
</dbReference>
<protein>
    <recommendedName>
        <fullName evidence="1">Glutamyl-tRNA(Gln) amidotransferase subunit A</fullName>
        <shortName evidence="1">Glu-ADT subunit A</shortName>
        <ecNumber evidence="1">6.3.5.7</ecNumber>
    </recommendedName>
</protein>
<sequence length="492" mass="52978">MTDLHRLSVRELAEGLGQAQFSSRELTQHYLNRIDKIDAQVKSYVTVTHEQALAQADAADALRQAGNAGFLTGVPLAHKDIFCTKGIKTTAGSKMLDNFISPYNATVVEKANAAGLVTLGKLNMDEFAMGSTSESSYFGATCNPWALDRVPGGSSGGSAAAVAADLAPFATGTDTGGSIRQPASFCGLTGLKPTYGRVSRFGMIAYASSLDQGGPMARSAEDCAYLMNVMAGHDAKDSTSVKKDVDDYVANLNATALKGLRIGIPKQYFNVAGLDAEVKARVEESLKKLEEMGAVLVEIDLSMTESYVPTYYLIAPAEASSNLSRYDGVRYGYRCENPVDLMDLYKRSRSEGFGAEVQRRILIGTYALSAGYYDAYYVKAQKVRRLIQQDFLKAFENVDVIAAPSAPTTAYKIGADLTPVEMYLGDIYTLAVNLAGLPAINAPVGLDSNNLPVGLQLIGNYWSESQLLSIVHQYQQDTTFHTQRAAIAEENA</sequence>
<feature type="chain" id="PRO_0000241062" description="Glutamyl-tRNA(Gln) amidotransferase subunit A">
    <location>
        <begin position="1"/>
        <end position="492"/>
    </location>
</feature>
<feature type="active site" description="Charge relay system" evidence="1">
    <location>
        <position position="79"/>
    </location>
</feature>
<feature type="active site" description="Charge relay system" evidence="1">
    <location>
        <position position="154"/>
    </location>
</feature>
<feature type="active site" description="Acyl-ester intermediate" evidence="1">
    <location>
        <position position="178"/>
    </location>
</feature>
<keyword id="KW-0067">ATP-binding</keyword>
<keyword id="KW-0436">Ligase</keyword>
<keyword id="KW-0547">Nucleotide-binding</keyword>
<keyword id="KW-0648">Protein biosynthesis</keyword>
<organism>
    <name type="scientific">Acinetobacter baylyi (strain ATCC 33305 / BD413 / ADP1)</name>
    <dbReference type="NCBI Taxonomy" id="62977"/>
    <lineage>
        <taxon>Bacteria</taxon>
        <taxon>Pseudomonadati</taxon>
        <taxon>Pseudomonadota</taxon>
        <taxon>Gammaproteobacteria</taxon>
        <taxon>Moraxellales</taxon>
        <taxon>Moraxellaceae</taxon>
        <taxon>Acinetobacter</taxon>
    </lineage>
</organism>
<name>GATA_ACIAD</name>
<proteinExistence type="inferred from homology"/>
<gene>
    <name evidence="1" type="primary">gatA</name>
    <name type="ordered locus">ACIAD0823</name>
</gene>
<reference key="1">
    <citation type="journal article" date="2004" name="Nucleic Acids Res.">
        <title>Unique features revealed by the genome sequence of Acinetobacter sp. ADP1, a versatile and naturally transformation competent bacterium.</title>
        <authorList>
            <person name="Barbe V."/>
            <person name="Vallenet D."/>
            <person name="Fonknechten N."/>
            <person name="Kreimeyer A."/>
            <person name="Oztas S."/>
            <person name="Labarre L."/>
            <person name="Cruveiller S."/>
            <person name="Robert C."/>
            <person name="Duprat S."/>
            <person name="Wincker P."/>
            <person name="Ornston L.N."/>
            <person name="Weissenbach J."/>
            <person name="Marliere P."/>
            <person name="Cohen G.N."/>
            <person name="Medigue C."/>
        </authorList>
    </citation>
    <scope>NUCLEOTIDE SEQUENCE [LARGE SCALE GENOMIC DNA]</scope>
    <source>
        <strain>ATCC 33305 / BD413 / ADP1</strain>
    </source>
</reference>